<sequence length="111" mass="12076">MKTLLLAVAVVAFVCLGSADQLGLGRQQIDWGQGQAVGLPHGFCIQCNRKTWSNCSIGHRCLPYHMTCYTLYKPDENGEMKWAVKGCARMCPTAKSGERVKCCTGASCNSD</sequence>
<protein>
    <recommendedName>
        <fullName evidence="3 4">Denmotoxin</fullName>
    </recommendedName>
</protein>
<feature type="signal peptide" evidence="1">
    <location>
        <begin position="1"/>
        <end position="19"/>
    </location>
</feature>
<feature type="propeptide" id="PRO_0000313786" evidence="2">
    <location>
        <begin position="20"/>
        <end position="34"/>
    </location>
</feature>
<feature type="chain" id="PRO_5000141247" description="Denmotoxin" evidence="6">
    <location>
        <begin position="35"/>
        <end position="111"/>
    </location>
</feature>
<feature type="modified residue" description="Pyrrolidone carboxylic acid" evidence="2">
    <location>
        <position position="35"/>
    </location>
</feature>
<feature type="disulfide bond" evidence="2 7">
    <location>
        <begin position="44"/>
        <end position="68"/>
    </location>
</feature>
<feature type="disulfide bond" evidence="2 7">
    <location>
        <begin position="47"/>
        <end position="55"/>
    </location>
</feature>
<feature type="disulfide bond" evidence="2 7">
    <location>
        <begin position="61"/>
        <end position="87"/>
    </location>
</feature>
<feature type="disulfide bond" evidence="2 7">
    <location>
        <begin position="91"/>
        <end position="102"/>
    </location>
</feature>
<feature type="disulfide bond" evidence="2 7">
    <location>
        <begin position="103"/>
        <end position="108"/>
    </location>
</feature>
<feature type="strand" evidence="8">
    <location>
        <begin position="41"/>
        <end position="44"/>
    </location>
</feature>
<feature type="strand" evidence="8">
    <location>
        <begin position="47"/>
        <end position="53"/>
    </location>
</feature>
<feature type="strand" evidence="8">
    <location>
        <begin position="59"/>
        <end position="63"/>
    </location>
</feature>
<feature type="strand" evidence="8">
    <location>
        <begin position="67"/>
        <end position="73"/>
    </location>
</feature>
<feature type="strand" evidence="8">
    <location>
        <begin position="76"/>
        <end position="78"/>
    </location>
</feature>
<feature type="strand" evidence="8">
    <location>
        <begin position="81"/>
        <end position="90"/>
    </location>
</feature>
<feature type="strand" evidence="8">
    <location>
        <begin position="99"/>
        <end position="103"/>
    </location>
</feature>
<feature type="turn" evidence="8">
    <location>
        <begin position="106"/>
        <end position="109"/>
    </location>
</feature>
<keyword id="KW-0002">3D-structure</keyword>
<keyword id="KW-0008">Acetylcholine receptor inhibiting toxin</keyword>
<keyword id="KW-0903">Direct protein sequencing</keyword>
<keyword id="KW-1015">Disulfide bond</keyword>
<keyword id="KW-0872">Ion channel impairing toxin</keyword>
<keyword id="KW-0528">Neurotoxin</keyword>
<keyword id="KW-0629">Postsynaptic neurotoxin</keyword>
<keyword id="KW-0873">Pyrrolidone carboxylic acid</keyword>
<keyword id="KW-0964">Secreted</keyword>
<keyword id="KW-0732">Signal</keyword>
<keyword id="KW-0800">Toxin</keyword>
<dbReference type="EMBL" id="DQ366293">
    <property type="protein sequence ID" value="ABC95749.1"/>
    <property type="molecule type" value="mRNA"/>
</dbReference>
<dbReference type="EMBL" id="EF452300">
    <property type="protein sequence ID" value="ABR14059.1"/>
    <property type="molecule type" value="Genomic_DNA"/>
</dbReference>
<dbReference type="PDB" id="2H5F">
    <property type="method" value="X-ray"/>
    <property type="resolution" value="1.90 A"/>
    <property type="chains" value="A/B=35-111"/>
</dbReference>
<dbReference type="PDBsum" id="2H5F"/>
<dbReference type="SMR" id="Q06ZW0"/>
<dbReference type="EvolutionaryTrace" id="Q06ZW0"/>
<dbReference type="GO" id="GO:0005576">
    <property type="term" value="C:extracellular region"/>
    <property type="evidence" value="ECO:0007669"/>
    <property type="project" value="UniProtKB-SubCell"/>
</dbReference>
<dbReference type="GO" id="GO:0030550">
    <property type="term" value="F:acetylcholine receptor inhibitor activity"/>
    <property type="evidence" value="ECO:0007669"/>
    <property type="project" value="UniProtKB-KW"/>
</dbReference>
<dbReference type="GO" id="GO:0099106">
    <property type="term" value="F:ion channel regulator activity"/>
    <property type="evidence" value="ECO:0007669"/>
    <property type="project" value="UniProtKB-KW"/>
</dbReference>
<dbReference type="GO" id="GO:0090729">
    <property type="term" value="F:toxin activity"/>
    <property type="evidence" value="ECO:0007669"/>
    <property type="project" value="UniProtKB-KW"/>
</dbReference>
<dbReference type="CDD" id="cd00206">
    <property type="entry name" value="TFP_snake_toxin"/>
    <property type="match status" value="1"/>
</dbReference>
<dbReference type="Gene3D" id="2.10.60.10">
    <property type="entry name" value="CD59"/>
    <property type="match status" value="1"/>
</dbReference>
<dbReference type="InterPro" id="IPR003571">
    <property type="entry name" value="Snake_3FTx"/>
</dbReference>
<dbReference type="InterPro" id="IPR045860">
    <property type="entry name" value="Snake_toxin-like_sf"/>
</dbReference>
<dbReference type="InterPro" id="IPR054131">
    <property type="entry name" value="Toxin_cobra-type"/>
</dbReference>
<dbReference type="Pfam" id="PF21947">
    <property type="entry name" value="Toxin_cobra-type"/>
    <property type="match status" value="1"/>
</dbReference>
<dbReference type="SUPFAM" id="SSF57302">
    <property type="entry name" value="Snake toxin-like"/>
    <property type="match status" value="1"/>
</dbReference>
<proteinExistence type="evidence at protein level"/>
<organism>
    <name type="scientific">Boiga dendrophila</name>
    <name type="common">Mangrove snake</name>
    <name type="synonym">Gold-ringed cat snake</name>
    <dbReference type="NCBI Taxonomy" id="46286"/>
    <lineage>
        <taxon>Eukaryota</taxon>
        <taxon>Metazoa</taxon>
        <taxon>Chordata</taxon>
        <taxon>Craniata</taxon>
        <taxon>Vertebrata</taxon>
        <taxon>Euteleostomi</taxon>
        <taxon>Lepidosauria</taxon>
        <taxon>Squamata</taxon>
        <taxon>Bifurcata</taxon>
        <taxon>Unidentata</taxon>
        <taxon>Episquamata</taxon>
        <taxon>Toxicofera</taxon>
        <taxon>Serpentes</taxon>
        <taxon>Colubroidea</taxon>
        <taxon>Colubridae</taxon>
        <taxon>Colubrinae</taxon>
        <taxon>Boiga</taxon>
    </lineage>
</organism>
<accession>Q06ZW0</accession>
<accession>B1NF31</accession>
<comment type="function">
    <text evidence="2">This bird-specific postsynaptic neurotoxin irreversibly binds and inhibits the chick muscle alpha-1-beta-1-gamma-delta (CHRNA1-CHRNB1-CHRNG-CHNRD) nicotinic acetylcholine receptor (nAChR) 100-fold more compared with the mouse receptor. The weak binding to mouse receptor is reversible.</text>
</comment>
<comment type="subunit">
    <text evidence="2">Monomer.</text>
</comment>
<comment type="subcellular location">
    <subcellularLocation>
        <location evidence="2">Secreted</location>
    </subcellularLocation>
</comment>
<comment type="tissue specificity">
    <text evidence="6">Expressed by the venom gland.</text>
</comment>
<comment type="mass spectrometry" mass="8507.92" error="0.3" method="Electrospray" evidence="2"/>
<comment type="similarity">
    <text evidence="5">Belongs to the three-finger toxin family. Ancestral subfamily. Boigatoxin sub-subfamily.</text>
</comment>
<name>3NB_BOIDE</name>
<evidence type="ECO:0000255" key="1"/>
<evidence type="ECO:0000269" key="2">
    <source>
    </source>
</evidence>
<evidence type="ECO:0000303" key="3">
    <source>
    </source>
</evidence>
<evidence type="ECO:0000303" key="4">
    <source>
    </source>
</evidence>
<evidence type="ECO:0000305" key="5"/>
<evidence type="ECO:0000305" key="6">
    <source>
    </source>
</evidence>
<evidence type="ECO:0000312" key="7">
    <source>
        <dbReference type="PDB" id="2H5F"/>
    </source>
</evidence>
<evidence type="ECO:0007829" key="8">
    <source>
        <dbReference type="PDB" id="2H5F"/>
    </source>
</evidence>
<reference key="1">
    <citation type="journal article" date="2006" name="J. Biol. Chem.">
        <title>Denmotoxin, a three-finger toxin from the colubrid snake Boiga dendrophila (Mangrove Catsnake) with bird-specific activity.</title>
        <authorList>
            <person name="Pawlak J."/>
            <person name="Mackessy S.P."/>
            <person name="Fry B.G."/>
            <person name="Bhatia M."/>
            <person name="Mourier G."/>
            <person name="Fruchart-Gaillard C."/>
            <person name="Servent D."/>
            <person name="Menez R."/>
            <person name="Stura E."/>
            <person name="Menez A."/>
            <person name="Kini R.M."/>
        </authorList>
    </citation>
    <scope>NUCLEOTIDE SEQUENCE [MRNA]</scope>
    <scope>PROTEIN SEQUENCE OF 35-81 AND 86-111</scope>
    <scope>FUNCTION</scope>
    <scope>SUBUNIT</scope>
    <scope>SUBCELLULAR LOCATION</scope>
    <scope>SYNTHESIS OF 35-111</scope>
    <scope>MASS SPECTROMETRY</scope>
    <scope>PYROGLUTAMATE FORMATION AT GLN-35</scope>
    <scope>X-RAY CRYSTALLOGRAPHY (1.9 ANGSTROMS) OF 37-111</scope>
    <scope>DISULFIDE BONDS</scope>
    <source>
        <tissue>Venom</tissue>
        <tissue>Venom gland</tissue>
    </source>
</reference>
<reference key="2">
    <citation type="journal article" date="2008" name="Biochimie">
        <title>Unique gene organization of colubrid three-finger toxins: complete cDNA and gene sequences of denmotoxin, a bird-specific toxin from colubrid snake Boiga dendrophila (Mangrove Catsnake).</title>
        <authorList>
            <person name="Pawlak J."/>
            <person name="Kini R.M."/>
        </authorList>
    </citation>
    <scope>NUCLEOTIDE SEQUENCE [GENOMIC DNA]</scope>
    <source>
        <tissue>Liver</tissue>
    </source>
</reference>